<proteinExistence type="inferred from homology"/>
<comment type="function">
    <text evidence="1">NDH-1 shuttles electrons from NADH, via FMN and iron-sulfur (Fe-S) centers, to quinones in the respiratory chain. The immediate electron acceptor for the enzyme in this species is believed to be ubiquinone. Couples the redox reaction to proton translocation (for every two electrons transferred, four hydrogen ions are translocated across the cytoplasmic membrane), and thus conserves the redox energy in a proton gradient. This subunit may bind ubiquinone.</text>
</comment>
<comment type="catalytic activity">
    <reaction evidence="1">
        <text>a quinone + NADH + 5 H(+)(in) = a quinol + NAD(+) + 4 H(+)(out)</text>
        <dbReference type="Rhea" id="RHEA:57888"/>
        <dbReference type="ChEBI" id="CHEBI:15378"/>
        <dbReference type="ChEBI" id="CHEBI:24646"/>
        <dbReference type="ChEBI" id="CHEBI:57540"/>
        <dbReference type="ChEBI" id="CHEBI:57945"/>
        <dbReference type="ChEBI" id="CHEBI:132124"/>
    </reaction>
</comment>
<comment type="subunit">
    <text evidence="1">NDH-1 is composed of 14 different subunits. Subunits NuoA, H, J, K, L, M, N constitute the membrane sector of the complex.</text>
</comment>
<comment type="subcellular location">
    <subcellularLocation>
        <location evidence="1">Cell inner membrane</location>
        <topology evidence="1">Multi-pass membrane protein</topology>
    </subcellularLocation>
</comment>
<comment type="similarity">
    <text evidence="1">Belongs to the complex I subunit 1 family.</text>
</comment>
<evidence type="ECO:0000255" key="1">
    <source>
        <dbReference type="HAMAP-Rule" id="MF_01350"/>
    </source>
</evidence>
<accession>Q1GTK6</accession>
<organism>
    <name type="scientific">Sphingopyxis alaskensis (strain DSM 13593 / LMG 18877 / RB2256)</name>
    <name type="common">Sphingomonas alaskensis</name>
    <dbReference type="NCBI Taxonomy" id="317655"/>
    <lineage>
        <taxon>Bacteria</taxon>
        <taxon>Pseudomonadati</taxon>
        <taxon>Pseudomonadota</taxon>
        <taxon>Alphaproteobacteria</taxon>
        <taxon>Sphingomonadales</taxon>
        <taxon>Sphingomonadaceae</taxon>
        <taxon>Sphingopyxis</taxon>
    </lineage>
</organism>
<protein>
    <recommendedName>
        <fullName evidence="1">NADH-quinone oxidoreductase subunit H</fullName>
        <ecNumber evidence="1">7.1.1.-</ecNumber>
    </recommendedName>
    <alternativeName>
        <fullName evidence="1">NADH dehydrogenase I subunit H</fullName>
    </alternativeName>
    <alternativeName>
        <fullName evidence="1">NDH-1 subunit H</fullName>
    </alternativeName>
</protein>
<name>NUOH_SPHAL</name>
<feature type="chain" id="PRO_0000298852" description="NADH-quinone oxidoreductase subunit H">
    <location>
        <begin position="1"/>
        <end position="347"/>
    </location>
</feature>
<feature type="transmembrane region" description="Helical" evidence="1">
    <location>
        <begin position="21"/>
        <end position="41"/>
    </location>
</feature>
<feature type="transmembrane region" description="Helical" evidence="1">
    <location>
        <begin position="87"/>
        <end position="107"/>
    </location>
</feature>
<feature type="transmembrane region" description="Helical" evidence="1">
    <location>
        <begin position="118"/>
        <end position="138"/>
    </location>
</feature>
<feature type="transmembrane region" description="Helical" evidence="1">
    <location>
        <begin position="157"/>
        <end position="177"/>
    </location>
</feature>
<feature type="transmembrane region" description="Helical" evidence="1">
    <location>
        <begin position="195"/>
        <end position="215"/>
    </location>
</feature>
<feature type="transmembrane region" description="Helical" evidence="1">
    <location>
        <begin position="258"/>
        <end position="278"/>
    </location>
</feature>
<feature type="transmembrane region" description="Helical" evidence="1">
    <location>
        <begin position="283"/>
        <end position="303"/>
    </location>
</feature>
<feature type="transmembrane region" description="Helical" evidence="1">
    <location>
        <begin position="323"/>
        <end position="343"/>
    </location>
</feature>
<gene>
    <name evidence="1" type="primary">nuoH</name>
    <name type="ordered locus">Sala_1302</name>
</gene>
<keyword id="KW-0997">Cell inner membrane</keyword>
<keyword id="KW-1003">Cell membrane</keyword>
<keyword id="KW-0472">Membrane</keyword>
<keyword id="KW-0520">NAD</keyword>
<keyword id="KW-0874">Quinone</keyword>
<keyword id="KW-1185">Reference proteome</keyword>
<keyword id="KW-1278">Translocase</keyword>
<keyword id="KW-0812">Transmembrane</keyword>
<keyword id="KW-1133">Transmembrane helix</keyword>
<keyword id="KW-0830">Ubiquinone</keyword>
<sequence>MTDFFQSLGMSYEWAWGLATVAGILLIALPLMLAVAMIIYADRKIWAAIALRRGPNVVGPFGLLQSFADGLKVFLQETIIPSGANRGLFLIAPIITFTVALLAWAVIPFNSGAVLADINVGLLYILAISSLGVYGVILSGWASNSKYPFFSALRASAQMISYEVSIGFILIGVVLFADSFNMNEIVKAQQGHGLGIVNAFGFNLLLFPLAVMFLISSLAETARAPFDLTEAESELVAGYQTEYSSMSFALFWLGEYANVLLMCTLNAVLFWGGWLPPIDWAPLYAVPGIIWLFAKILFFFFVFSWVKATVPRYRYDQLMRLGWKIFLPISLIWIFLISGYLMLTRYS</sequence>
<dbReference type="EC" id="7.1.1.-" evidence="1"/>
<dbReference type="EMBL" id="CP000356">
    <property type="protein sequence ID" value="ABF53016.1"/>
    <property type="molecule type" value="Genomic_DNA"/>
</dbReference>
<dbReference type="RefSeq" id="WP_011541598.1">
    <property type="nucleotide sequence ID" value="NC_008048.1"/>
</dbReference>
<dbReference type="SMR" id="Q1GTK6"/>
<dbReference type="STRING" id="317655.Sala_1302"/>
<dbReference type="KEGG" id="sal:Sala_1302"/>
<dbReference type="eggNOG" id="COG1005">
    <property type="taxonomic scope" value="Bacteria"/>
</dbReference>
<dbReference type="HOGENOM" id="CLU_015134_0_1_5"/>
<dbReference type="OrthoDB" id="9803734at2"/>
<dbReference type="Proteomes" id="UP000006578">
    <property type="component" value="Chromosome"/>
</dbReference>
<dbReference type="GO" id="GO:0005886">
    <property type="term" value="C:plasma membrane"/>
    <property type="evidence" value="ECO:0007669"/>
    <property type="project" value="UniProtKB-SubCell"/>
</dbReference>
<dbReference type="GO" id="GO:0003954">
    <property type="term" value="F:NADH dehydrogenase activity"/>
    <property type="evidence" value="ECO:0007669"/>
    <property type="project" value="TreeGrafter"/>
</dbReference>
<dbReference type="GO" id="GO:0016655">
    <property type="term" value="F:oxidoreductase activity, acting on NAD(P)H, quinone or similar compound as acceptor"/>
    <property type="evidence" value="ECO:0007669"/>
    <property type="project" value="UniProtKB-UniRule"/>
</dbReference>
<dbReference type="GO" id="GO:0048038">
    <property type="term" value="F:quinone binding"/>
    <property type="evidence" value="ECO:0007669"/>
    <property type="project" value="UniProtKB-KW"/>
</dbReference>
<dbReference type="GO" id="GO:0009060">
    <property type="term" value="P:aerobic respiration"/>
    <property type="evidence" value="ECO:0007669"/>
    <property type="project" value="TreeGrafter"/>
</dbReference>
<dbReference type="HAMAP" id="MF_01350">
    <property type="entry name" value="NDH1_NuoH"/>
    <property type="match status" value="1"/>
</dbReference>
<dbReference type="InterPro" id="IPR001694">
    <property type="entry name" value="NADH_UbQ_OxRdtase_su1/FPO"/>
</dbReference>
<dbReference type="InterPro" id="IPR018086">
    <property type="entry name" value="NADH_UbQ_OxRdtase_su1_CS"/>
</dbReference>
<dbReference type="NCBIfam" id="NF004741">
    <property type="entry name" value="PRK06076.1-2"/>
    <property type="match status" value="1"/>
</dbReference>
<dbReference type="NCBIfam" id="NF004745">
    <property type="entry name" value="PRK06076.1-6"/>
    <property type="match status" value="1"/>
</dbReference>
<dbReference type="PANTHER" id="PTHR11432">
    <property type="entry name" value="NADH DEHYDROGENASE SUBUNIT 1"/>
    <property type="match status" value="1"/>
</dbReference>
<dbReference type="PANTHER" id="PTHR11432:SF3">
    <property type="entry name" value="NADH-UBIQUINONE OXIDOREDUCTASE CHAIN 1"/>
    <property type="match status" value="1"/>
</dbReference>
<dbReference type="Pfam" id="PF00146">
    <property type="entry name" value="NADHdh"/>
    <property type="match status" value="1"/>
</dbReference>
<dbReference type="PROSITE" id="PS00668">
    <property type="entry name" value="COMPLEX1_ND1_2"/>
    <property type="match status" value="1"/>
</dbReference>
<reference key="1">
    <citation type="journal article" date="2009" name="Proc. Natl. Acad. Sci. U.S.A.">
        <title>The genomic basis of trophic strategy in marine bacteria.</title>
        <authorList>
            <person name="Lauro F.M."/>
            <person name="McDougald D."/>
            <person name="Thomas T."/>
            <person name="Williams T.J."/>
            <person name="Egan S."/>
            <person name="Rice S."/>
            <person name="DeMaere M.Z."/>
            <person name="Ting L."/>
            <person name="Ertan H."/>
            <person name="Johnson J."/>
            <person name="Ferriera S."/>
            <person name="Lapidus A."/>
            <person name="Anderson I."/>
            <person name="Kyrpides N."/>
            <person name="Munk A.C."/>
            <person name="Detter C."/>
            <person name="Han C.S."/>
            <person name="Brown M.V."/>
            <person name="Robb F.T."/>
            <person name="Kjelleberg S."/>
            <person name="Cavicchioli R."/>
        </authorList>
    </citation>
    <scope>NUCLEOTIDE SEQUENCE [LARGE SCALE GENOMIC DNA]</scope>
    <source>
        <strain>DSM 13593 / LMG 18877 / RB2256</strain>
    </source>
</reference>